<evidence type="ECO:0000250" key="1"/>
<evidence type="ECO:0000250" key="2">
    <source>
        <dbReference type="UniProtKB" id="Q059U7"/>
    </source>
</evidence>
<evidence type="ECO:0000250" key="3">
    <source>
        <dbReference type="UniProtKB" id="Q2I0E5"/>
    </source>
</evidence>
<evidence type="ECO:0000255" key="4">
    <source>
        <dbReference type="PROSITE-ProRule" id="PRU00143"/>
    </source>
</evidence>
<evidence type="ECO:0000256" key="5">
    <source>
        <dbReference type="SAM" id="MobiDB-lite"/>
    </source>
</evidence>
<evidence type="ECO:0000305" key="6"/>
<accession>E7FCN8</accession>
<protein>
    <recommendedName>
        <fullName>Protein inturned</fullName>
    </recommendedName>
    <alternativeName>
        <fullName>Inturned planar cell polarity effector homolog</fullName>
    </alternativeName>
</protein>
<keyword id="KW-0966">Cell projection</keyword>
<keyword id="KW-0970">Cilium biogenesis/degradation</keyword>
<keyword id="KW-0963">Cytoplasm</keyword>
<keyword id="KW-0206">Cytoskeleton</keyword>
<keyword id="KW-0217">Developmental protein</keyword>
<keyword id="KW-1185">Reference proteome</keyword>
<feature type="chain" id="PRO_0000416285" description="Protein inturned">
    <location>
        <begin position="1"/>
        <end position="915"/>
    </location>
</feature>
<feature type="domain" description="PDZ" evidence="4">
    <location>
        <begin position="165"/>
        <end position="253"/>
    </location>
</feature>
<feature type="region of interest" description="Disordered" evidence="5">
    <location>
        <begin position="88"/>
        <end position="144"/>
    </location>
</feature>
<feature type="region of interest" description="Disordered" evidence="5">
    <location>
        <begin position="688"/>
        <end position="738"/>
    </location>
</feature>
<feature type="compositionally biased region" description="Basic residues" evidence="5">
    <location>
        <begin position="104"/>
        <end position="118"/>
    </location>
</feature>
<feature type="compositionally biased region" description="Polar residues" evidence="5">
    <location>
        <begin position="128"/>
        <end position="139"/>
    </location>
</feature>
<sequence length="915" mass="101132">MFSTCSDGRPFQSFSTNLEDFDSIRSVLLYSDLEPEWLDDVQKNGQLFYLELSDGEEEALLAQVSANHSAATNHVRFSEKEAEIITDNAKRQANSSNKSEAKLKKLTKILRRKRRPSQRKAEGKDSSQRPASILKNQAGQRPGVVVQQQRLKDVCVYLNPKRLSSVSSSSADRGGLLEALLGVVHRPGGNTGKRGGKLIIHGLIPHSPASKCAEILIGDALVAVDDVEVTSENIERVLSCIPGPMQVRLTLETVCPAGVSPESKVSASPQVSQLVRLLWGEDTIELQMSIADVPHIAMFLSLRLDSETQQDEQEIVYQYPQSEASAQLKAVRGIFLTLCDMLENVTGGQIISSSLWLQQQLVHVGYWKEESNLLVIAVPASRVPLLYLQTVIEGVVRTLKVMYGSLDRGFSDVENAPRLDHFFCLFFQQLIQPSRLIHSSRTPDLYGSLFLDGLPAVRWLTLPPDIKVEVDTVLSDFESSDFGDMSEDFYGMRRLYVILGSCLFYKGYLIANHLPKEDLLDVCLYCQHYCLLPLASEQRVAQLVVWREVFPQRRETRNSTAHPGYCQPHARHFLLIVGLRHFMQCVLLEAGGCASSAVGRPTPDSVYVDQVKATLLQLESLDAGIEERLSAPPTPCLSCADWFLPAGGRSQQDTIGSSPILNRLTAAIKPPSPGGIGRSLFGEAGTVGIRGRRASPQRSQSDSGSEGHADGTPASVARRDSLGSGGSDGSLGSAGFLKMPRLKHPNPFYLGSLRKSLSERETEEMQNVLQVTAGVENTLFHYVLMESVQGIFIAPTHTEIRHLSGSIHPQLIHNFQHCCLSIRQAFQQSLPTRDRRGPERQSTAGLGPVKEHGVLFQCKPQNWTDQKKPAPTMTYWVIGRMLLEPVPQEFYVCFHDSVAEVPVEMAFRLSFGLAV</sequence>
<comment type="function">
    <text evidence="1">Plays a key role in ciliogenesis and embryonic development. Regulator of cilia formation by controlling the organization of the apical actin cytoskeleton and the positioning of the basal bodies at the apical cell surface, which in turn is essential for the normal orientation of elongating ciliary microtubules. Plays a key role in definition of cell polarity via its role in ciliogenesis but not via conversion extension. Has an indirect effect on hedgehog signaling (By similarity).</text>
</comment>
<comment type="subcellular location">
    <subcellularLocation>
        <location evidence="2">Cytoplasm</location>
    </subcellularLocation>
    <subcellularLocation>
        <location evidence="1">Cell surface</location>
    </subcellularLocation>
    <subcellularLocation>
        <location evidence="3">Cytoplasm</location>
        <location evidence="3">Cytoskeleton</location>
        <location evidence="3">Cilium basal body</location>
    </subcellularLocation>
    <text evidence="1">Enriched at the apical surface in ciliated cells.</text>
</comment>
<comment type="similarity">
    <text evidence="6">Belongs to the inturned family.</text>
</comment>
<reference key="1">
    <citation type="journal article" date="2013" name="Nature">
        <title>The zebrafish reference genome sequence and its relationship to the human genome.</title>
        <authorList>
            <person name="Howe K."/>
            <person name="Clark M.D."/>
            <person name="Torroja C.F."/>
            <person name="Torrance J."/>
            <person name="Berthelot C."/>
            <person name="Muffato M."/>
            <person name="Collins J.E."/>
            <person name="Humphray S."/>
            <person name="McLaren K."/>
            <person name="Matthews L."/>
            <person name="McLaren S."/>
            <person name="Sealy I."/>
            <person name="Caccamo M."/>
            <person name="Churcher C."/>
            <person name="Scott C."/>
            <person name="Barrett J.C."/>
            <person name="Koch R."/>
            <person name="Rauch G.J."/>
            <person name="White S."/>
            <person name="Chow W."/>
            <person name="Kilian B."/>
            <person name="Quintais L.T."/>
            <person name="Guerra-Assuncao J.A."/>
            <person name="Zhou Y."/>
            <person name="Gu Y."/>
            <person name="Yen J."/>
            <person name="Vogel J.H."/>
            <person name="Eyre T."/>
            <person name="Redmond S."/>
            <person name="Banerjee R."/>
            <person name="Chi J."/>
            <person name="Fu B."/>
            <person name="Langley E."/>
            <person name="Maguire S.F."/>
            <person name="Laird G.K."/>
            <person name="Lloyd D."/>
            <person name="Kenyon E."/>
            <person name="Donaldson S."/>
            <person name="Sehra H."/>
            <person name="Almeida-King J."/>
            <person name="Loveland J."/>
            <person name="Trevanion S."/>
            <person name="Jones M."/>
            <person name="Quail M."/>
            <person name="Willey D."/>
            <person name="Hunt A."/>
            <person name="Burton J."/>
            <person name="Sims S."/>
            <person name="McLay K."/>
            <person name="Plumb B."/>
            <person name="Davis J."/>
            <person name="Clee C."/>
            <person name="Oliver K."/>
            <person name="Clark R."/>
            <person name="Riddle C."/>
            <person name="Elliot D."/>
            <person name="Threadgold G."/>
            <person name="Harden G."/>
            <person name="Ware D."/>
            <person name="Begum S."/>
            <person name="Mortimore B."/>
            <person name="Kerry G."/>
            <person name="Heath P."/>
            <person name="Phillimore B."/>
            <person name="Tracey A."/>
            <person name="Corby N."/>
            <person name="Dunn M."/>
            <person name="Johnson C."/>
            <person name="Wood J."/>
            <person name="Clark S."/>
            <person name="Pelan S."/>
            <person name="Griffiths G."/>
            <person name="Smith M."/>
            <person name="Glithero R."/>
            <person name="Howden P."/>
            <person name="Barker N."/>
            <person name="Lloyd C."/>
            <person name="Stevens C."/>
            <person name="Harley J."/>
            <person name="Holt K."/>
            <person name="Panagiotidis G."/>
            <person name="Lovell J."/>
            <person name="Beasley H."/>
            <person name="Henderson C."/>
            <person name="Gordon D."/>
            <person name="Auger K."/>
            <person name="Wright D."/>
            <person name="Collins J."/>
            <person name="Raisen C."/>
            <person name="Dyer L."/>
            <person name="Leung K."/>
            <person name="Robertson L."/>
            <person name="Ambridge K."/>
            <person name="Leongamornlert D."/>
            <person name="McGuire S."/>
            <person name="Gilderthorp R."/>
            <person name="Griffiths C."/>
            <person name="Manthravadi D."/>
            <person name="Nichol S."/>
            <person name="Barker G."/>
            <person name="Whitehead S."/>
            <person name="Kay M."/>
            <person name="Brown J."/>
            <person name="Murnane C."/>
            <person name="Gray E."/>
            <person name="Humphries M."/>
            <person name="Sycamore N."/>
            <person name="Barker D."/>
            <person name="Saunders D."/>
            <person name="Wallis J."/>
            <person name="Babbage A."/>
            <person name="Hammond S."/>
            <person name="Mashreghi-Mohammadi M."/>
            <person name="Barr L."/>
            <person name="Martin S."/>
            <person name="Wray P."/>
            <person name="Ellington A."/>
            <person name="Matthews N."/>
            <person name="Ellwood M."/>
            <person name="Woodmansey R."/>
            <person name="Clark G."/>
            <person name="Cooper J."/>
            <person name="Tromans A."/>
            <person name="Grafham D."/>
            <person name="Skuce C."/>
            <person name="Pandian R."/>
            <person name="Andrews R."/>
            <person name="Harrison E."/>
            <person name="Kimberley A."/>
            <person name="Garnett J."/>
            <person name="Fosker N."/>
            <person name="Hall R."/>
            <person name="Garner P."/>
            <person name="Kelly D."/>
            <person name="Bird C."/>
            <person name="Palmer S."/>
            <person name="Gehring I."/>
            <person name="Berger A."/>
            <person name="Dooley C.M."/>
            <person name="Ersan-Urun Z."/>
            <person name="Eser C."/>
            <person name="Geiger H."/>
            <person name="Geisler M."/>
            <person name="Karotki L."/>
            <person name="Kirn A."/>
            <person name="Konantz J."/>
            <person name="Konantz M."/>
            <person name="Oberlander M."/>
            <person name="Rudolph-Geiger S."/>
            <person name="Teucke M."/>
            <person name="Lanz C."/>
            <person name="Raddatz G."/>
            <person name="Osoegawa K."/>
            <person name="Zhu B."/>
            <person name="Rapp A."/>
            <person name="Widaa S."/>
            <person name="Langford C."/>
            <person name="Yang F."/>
            <person name="Schuster S.C."/>
            <person name="Carter N.P."/>
            <person name="Harrow J."/>
            <person name="Ning Z."/>
            <person name="Herrero J."/>
            <person name="Searle S.M."/>
            <person name="Enright A."/>
            <person name="Geisler R."/>
            <person name="Plasterk R.H."/>
            <person name="Lee C."/>
            <person name="Westerfield M."/>
            <person name="de Jong P.J."/>
            <person name="Zon L.I."/>
            <person name="Postlethwait J.H."/>
            <person name="Nusslein-Volhard C."/>
            <person name="Hubbard T.J."/>
            <person name="Roest Crollius H."/>
            <person name="Rogers J."/>
            <person name="Stemple D.L."/>
        </authorList>
    </citation>
    <scope>NUCLEOTIDE SEQUENCE [LARGE SCALE GENOMIC DNA]</scope>
    <source>
        <strain>Tuebingen</strain>
    </source>
</reference>
<gene>
    <name type="primary">intu</name>
</gene>
<dbReference type="EMBL" id="CABZ01030293">
    <property type="status" value="NOT_ANNOTATED_CDS"/>
    <property type="molecule type" value="Genomic_DNA"/>
</dbReference>
<dbReference type="EMBL" id="CABZ01030294">
    <property type="status" value="NOT_ANNOTATED_CDS"/>
    <property type="molecule type" value="Genomic_DNA"/>
</dbReference>
<dbReference type="RefSeq" id="XP_005172228.1">
    <property type="nucleotide sequence ID" value="XM_005172171.3"/>
</dbReference>
<dbReference type="RefSeq" id="XP_068078231.1">
    <property type="nucleotide sequence ID" value="XM_068222130.1"/>
</dbReference>
<dbReference type="SMR" id="E7FCN8"/>
<dbReference type="FunCoup" id="E7FCN8">
    <property type="interactions" value="364"/>
</dbReference>
<dbReference type="STRING" id="7955.ENSDARP00000101586"/>
<dbReference type="PaxDb" id="7955-ENSDARP00000101586"/>
<dbReference type="PeptideAtlas" id="E7FCN8"/>
<dbReference type="Ensembl" id="ENSDART00000173376">
    <property type="protein sequence ID" value="ENSDARP00000142182"/>
    <property type="gene ID" value="ENSDARG00000077639"/>
</dbReference>
<dbReference type="GeneID" id="100007575"/>
<dbReference type="eggNOG" id="ENOG502QQJQ">
    <property type="taxonomic scope" value="Eukaryota"/>
</dbReference>
<dbReference type="HOGENOM" id="CLU_014223_0_1_1"/>
<dbReference type="InParanoid" id="E7FCN8"/>
<dbReference type="PhylomeDB" id="E7FCN8"/>
<dbReference type="TreeFam" id="TF323932"/>
<dbReference type="Reactome" id="R-DRE-5610787">
    <property type="pathway name" value="Hedgehog 'off' state"/>
</dbReference>
<dbReference type="PRO" id="PR:E7FCN8"/>
<dbReference type="Proteomes" id="UP000000437">
    <property type="component" value="Chromosome 7"/>
</dbReference>
<dbReference type="Bgee" id="ENSDARG00000077639">
    <property type="expression patterns" value="Expressed in early embryo and 19 other cell types or tissues"/>
</dbReference>
<dbReference type="ExpressionAtlas" id="E7FCN8">
    <property type="expression patterns" value="baseline and differential"/>
</dbReference>
<dbReference type="GO" id="GO:0009986">
    <property type="term" value="C:cell surface"/>
    <property type="evidence" value="ECO:0007669"/>
    <property type="project" value="UniProtKB-SubCell"/>
</dbReference>
<dbReference type="GO" id="GO:0005929">
    <property type="term" value="C:cilium"/>
    <property type="evidence" value="ECO:0000318"/>
    <property type="project" value="GO_Central"/>
</dbReference>
<dbReference type="GO" id="GO:0005737">
    <property type="term" value="C:cytoplasm"/>
    <property type="evidence" value="ECO:0000250"/>
    <property type="project" value="UniProtKB"/>
</dbReference>
<dbReference type="GO" id="GO:0005856">
    <property type="term" value="C:cytoskeleton"/>
    <property type="evidence" value="ECO:0007669"/>
    <property type="project" value="UniProtKB-KW"/>
</dbReference>
<dbReference type="GO" id="GO:0060271">
    <property type="term" value="P:cilium assembly"/>
    <property type="evidence" value="ECO:0000250"/>
    <property type="project" value="UniProtKB"/>
</dbReference>
<dbReference type="GO" id="GO:0001736">
    <property type="term" value="P:establishment of planar polarity"/>
    <property type="evidence" value="ECO:0007669"/>
    <property type="project" value="InterPro"/>
</dbReference>
<dbReference type="GO" id="GO:0060173">
    <property type="term" value="P:limb development"/>
    <property type="evidence" value="ECO:0000250"/>
    <property type="project" value="UniProtKB"/>
</dbReference>
<dbReference type="GO" id="GO:0007399">
    <property type="term" value="P:nervous system development"/>
    <property type="evidence" value="ECO:0000250"/>
    <property type="project" value="UniProtKB"/>
</dbReference>
<dbReference type="GO" id="GO:0008589">
    <property type="term" value="P:regulation of smoothened signaling pathway"/>
    <property type="evidence" value="ECO:0000250"/>
    <property type="project" value="UniProtKB"/>
</dbReference>
<dbReference type="GO" id="GO:0016192">
    <property type="term" value="P:vesicle-mediated transport"/>
    <property type="evidence" value="ECO:0007669"/>
    <property type="project" value="InterPro"/>
</dbReference>
<dbReference type="FunFam" id="2.30.42.10:FF:000327">
    <property type="entry name" value="Protein inturned"/>
    <property type="match status" value="1"/>
</dbReference>
<dbReference type="Gene3D" id="2.30.42.10">
    <property type="match status" value="1"/>
</dbReference>
<dbReference type="InterPro" id="IPR043987">
    <property type="entry name" value="CCZ1/INTU/HSP4_longin_1"/>
</dbReference>
<dbReference type="InterPro" id="IPR043989">
    <property type="entry name" value="CCZ1/INTU/HSP4_longin_3"/>
</dbReference>
<dbReference type="InterPro" id="IPR043988">
    <property type="entry name" value="CCZ1/INTU_longin_2"/>
</dbReference>
<dbReference type="InterPro" id="IPR039151">
    <property type="entry name" value="INTU"/>
</dbReference>
<dbReference type="InterPro" id="IPR001478">
    <property type="entry name" value="PDZ"/>
</dbReference>
<dbReference type="InterPro" id="IPR036034">
    <property type="entry name" value="PDZ_sf"/>
</dbReference>
<dbReference type="PANTHER" id="PTHR21082">
    <property type="entry name" value="PROTEIN INTURNED"/>
    <property type="match status" value="1"/>
</dbReference>
<dbReference type="PANTHER" id="PTHR21082:SF4">
    <property type="entry name" value="PROTEIN INTURNED"/>
    <property type="match status" value="1"/>
</dbReference>
<dbReference type="Pfam" id="PF19031">
    <property type="entry name" value="Intu_longin_1"/>
    <property type="match status" value="1"/>
</dbReference>
<dbReference type="Pfam" id="PF19032">
    <property type="entry name" value="Intu_longin_2"/>
    <property type="match status" value="1"/>
</dbReference>
<dbReference type="Pfam" id="PF19033">
    <property type="entry name" value="Intu_longin_3"/>
    <property type="match status" value="1"/>
</dbReference>
<dbReference type="SUPFAM" id="SSF50156">
    <property type="entry name" value="PDZ domain-like"/>
    <property type="match status" value="1"/>
</dbReference>
<dbReference type="PROSITE" id="PS50106">
    <property type="entry name" value="PDZ"/>
    <property type="match status" value="1"/>
</dbReference>
<organism>
    <name type="scientific">Danio rerio</name>
    <name type="common">Zebrafish</name>
    <name type="synonym">Brachydanio rerio</name>
    <dbReference type="NCBI Taxonomy" id="7955"/>
    <lineage>
        <taxon>Eukaryota</taxon>
        <taxon>Metazoa</taxon>
        <taxon>Chordata</taxon>
        <taxon>Craniata</taxon>
        <taxon>Vertebrata</taxon>
        <taxon>Euteleostomi</taxon>
        <taxon>Actinopterygii</taxon>
        <taxon>Neopterygii</taxon>
        <taxon>Teleostei</taxon>
        <taxon>Ostariophysi</taxon>
        <taxon>Cypriniformes</taxon>
        <taxon>Danionidae</taxon>
        <taxon>Danioninae</taxon>
        <taxon>Danio</taxon>
    </lineage>
</organism>
<proteinExistence type="inferred from homology"/>
<name>INTU_DANRE</name>